<dbReference type="EC" id="7.1.2.2" evidence="1"/>
<dbReference type="EMBL" id="CU928164">
    <property type="protein sequence ID" value="CAR20444.1"/>
    <property type="molecule type" value="Genomic_DNA"/>
</dbReference>
<dbReference type="RefSeq" id="WP_001176745.1">
    <property type="nucleotide sequence ID" value="NC_011750.1"/>
</dbReference>
<dbReference type="RefSeq" id="YP_002410213.1">
    <property type="nucleotide sequence ID" value="NC_011750.1"/>
</dbReference>
<dbReference type="SMR" id="B7NR36"/>
<dbReference type="STRING" id="585057.ECIAI39_4338"/>
<dbReference type="GeneID" id="93778233"/>
<dbReference type="KEGG" id="ect:ECIAI39_4338"/>
<dbReference type="PATRIC" id="fig|585057.6.peg.4483"/>
<dbReference type="HOGENOM" id="CLU_010091_2_1_6"/>
<dbReference type="Proteomes" id="UP000000749">
    <property type="component" value="Chromosome"/>
</dbReference>
<dbReference type="GO" id="GO:0005886">
    <property type="term" value="C:plasma membrane"/>
    <property type="evidence" value="ECO:0007669"/>
    <property type="project" value="UniProtKB-SubCell"/>
</dbReference>
<dbReference type="GO" id="GO:0045259">
    <property type="term" value="C:proton-transporting ATP synthase complex"/>
    <property type="evidence" value="ECO:0007669"/>
    <property type="project" value="UniProtKB-KW"/>
</dbReference>
<dbReference type="GO" id="GO:0043531">
    <property type="term" value="F:ADP binding"/>
    <property type="evidence" value="ECO:0007669"/>
    <property type="project" value="TreeGrafter"/>
</dbReference>
<dbReference type="GO" id="GO:0005524">
    <property type="term" value="F:ATP binding"/>
    <property type="evidence" value="ECO:0007669"/>
    <property type="project" value="UniProtKB-UniRule"/>
</dbReference>
<dbReference type="GO" id="GO:0046933">
    <property type="term" value="F:proton-transporting ATP synthase activity, rotational mechanism"/>
    <property type="evidence" value="ECO:0007669"/>
    <property type="project" value="UniProtKB-UniRule"/>
</dbReference>
<dbReference type="CDD" id="cd18113">
    <property type="entry name" value="ATP-synt_F1_alpha_C"/>
    <property type="match status" value="1"/>
</dbReference>
<dbReference type="CDD" id="cd18116">
    <property type="entry name" value="ATP-synt_F1_alpha_N"/>
    <property type="match status" value="1"/>
</dbReference>
<dbReference type="CDD" id="cd01132">
    <property type="entry name" value="F1-ATPase_alpha_CD"/>
    <property type="match status" value="1"/>
</dbReference>
<dbReference type="FunFam" id="1.20.150.20:FF:000001">
    <property type="entry name" value="ATP synthase subunit alpha"/>
    <property type="match status" value="1"/>
</dbReference>
<dbReference type="FunFam" id="2.40.30.20:FF:000001">
    <property type="entry name" value="ATP synthase subunit alpha"/>
    <property type="match status" value="1"/>
</dbReference>
<dbReference type="FunFam" id="3.40.50.300:FF:000002">
    <property type="entry name" value="ATP synthase subunit alpha"/>
    <property type="match status" value="1"/>
</dbReference>
<dbReference type="Gene3D" id="2.40.30.20">
    <property type="match status" value="1"/>
</dbReference>
<dbReference type="Gene3D" id="1.20.150.20">
    <property type="entry name" value="ATP synthase alpha/beta chain, C-terminal domain"/>
    <property type="match status" value="1"/>
</dbReference>
<dbReference type="Gene3D" id="3.40.50.300">
    <property type="entry name" value="P-loop containing nucleotide triphosphate hydrolases"/>
    <property type="match status" value="1"/>
</dbReference>
<dbReference type="HAMAP" id="MF_01346">
    <property type="entry name" value="ATP_synth_alpha_bact"/>
    <property type="match status" value="1"/>
</dbReference>
<dbReference type="InterPro" id="IPR023366">
    <property type="entry name" value="ATP_synth_asu-like_sf"/>
</dbReference>
<dbReference type="InterPro" id="IPR000793">
    <property type="entry name" value="ATP_synth_asu_C"/>
</dbReference>
<dbReference type="InterPro" id="IPR038376">
    <property type="entry name" value="ATP_synth_asu_C_sf"/>
</dbReference>
<dbReference type="InterPro" id="IPR033732">
    <property type="entry name" value="ATP_synth_F1_a_nt-bd_dom"/>
</dbReference>
<dbReference type="InterPro" id="IPR005294">
    <property type="entry name" value="ATP_synth_F1_asu"/>
</dbReference>
<dbReference type="InterPro" id="IPR020003">
    <property type="entry name" value="ATPase_a/bsu_AS"/>
</dbReference>
<dbReference type="InterPro" id="IPR004100">
    <property type="entry name" value="ATPase_F1/V1/A1_a/bsu_N"/>
</dbReference>
<dbReference type="InterPro" id="IPR036121">
    <property type="entry name" value="ATPase_F1/V1/A1_a/bsu_N_sf"/>
</dbReference>
<dbReference type="InterPro" id="IPR000194">
    <property type="entry name" value="ATPase_F1/V1/A1_a/bsu_nucl-bd"/>
</dbReference>
<dbReference type="InterPro" id="IPR027417">
    <property type="entry name" value="P-loop_NTPase"/>
</dbReference>
<dbReference type="NCBIfam" id="TIGR00962">
    <property type="entry name" value="atpA"/>
    <property type="match status" value="1"/>
</dbReference>
<dbReference type="NCBIfam" id="NF009884">
    <property type="entry name" value="PRK13343.1"/>
    <property type="match status" value="1"/>
</dbReference>
<dbReference type="PANTHER" id="PTHR48082">
    <property type="entry name" value="ATP SYNTHASE SUBUNIT ALPHA, MITOCHONDRIAL"/>
    <property type="match status" value="1"/>
</dbReference>
<dbReference type="PANTHER" id="PTHR48082:SF2">
    <property type="entry name" value="ATP SYNTHASE SUBUNIT ALPHA, MITOCHONDRIAL"/>
    <property type="match status" value="1"/>
</dbReference>
<dbReference type="Pfam" id="PF00006">
    <property type="entry name" value="ATP-synt_ab"/>
    <property type="match status" value="1"/>
</dbReference>
<dbReference type="Pfam" id="PF00306">
    <property type="entry name" value="ATP-synt_ab_C"/>
    <property type="match status" value="1"/>
</dbReference>
<dbReference type="Pfam" id="PF02874">
    <property type="entry name" value="ATP-synt_ab_N"/>
    <property type="match status" value="1"/>
</dbReference>
<dbReference type="SUPFAM" id="SSF47917">
    <property type="entry name" value="C-terminal domain of alpha and beta subunits of F1 ATP synthase"/>
    <property type="match status" value="1"/>
</dbReference>
<dbReference type="SUPFAM" id="SSF50615">
    <property type="entry name" value="N-terminal domain of alpha and beta subunits of F1 ATP synthase"/>
    <property type="match status" value="1"/>
</dbReference>
<dbReference type="SUPFAM" id="SSF52540">
    <property type="entry name" value="P-loop containing nucleoside triphosphate hydrolases"/>
    <property type="match status" value="1"/>
</dbReference>
<dbReference type="PROSITE" id="PS00152">
    <property type="entry name" value="ATPASE_ALPHA_BETA"/>
    <property type="match status" value="1"/>
</dbReference>
<comment type="function">
    <text evidence="1">Produces ATP from ADP in the presence of a proton gradient across the membrane. The alpha chain is a regulatory subunit.</text>
</comment>
<comment type="catalytic activity">
    <reaction evidence="1">
        <text>ATP + H2O + 4 H(+)(in) = ADP + phosphate + 5 H(+)(out)</text>
        <dbReference type="Rhea" id="RHEA:57720"/>
        <dbReference type="ChEBI" id="CHEBI:15377"/>
        <dbReference type="ChEBI" id="CHEBI:15378"/>
        <dbReference type="ChEBI" id="CHEBI:30616"/>
        <dbReference type="ChEBI" id="CHEBI:43474"/>
        <dbReference type="ChEBI" id="CHEBI:456216"/>
        <dbReference type="EC" id="7.1.2.2"/>
    </reaction>
</comment>
<comment type="subunit">
    <text evidence="1">F-type ATPases have 2 components, CF(1) - the catalytic core - and CF(0) - the membrane proton channel. CF(1) has five subunits: alpha(3), beta(3), gamma(1), delta(1), epsilon(1). CF(0) has three main subunits: a(1), b(2) and c(9-12). The alpha and beta chains form an alternating ring which encloses part of the gamma chain. CF(1) is attached to CF(0) by a central stalk formed by the gamma and epsilon chains, while a peripheral stalk is formed by the delta and b chains.</text>
</comment>
<comment type="subcellular location">
    <subcellularLocation>
        <location evidence="1">Cell inner membrane</location>
        <topology evidence="1">Peripheral membrane protein</topology>
    </subcellularLocation>
</comment>
<comment type="similarity">
    <text evidence="1">Belongs to the ATPase alpha/beta chains family.</text>
</comment>
<proteinExistence type="inferred from homology"/>
<evidence type="ECO:0000255" key="1">
    <source>
        <dbReference type="HAMAP-Rule" id="MF_01346"/>
    </source>
</evidence>
<feature type="chain" id="PRO_1000143374" description="ATP synthase subunit alpha">
    <location>
        <begin position="1"/>
        <end position="513"/>
    </location>
</feature>
<feature type="binding site" evidence="1">
    <location>
        <begin position="169"/>
        <end position="176"/>
    </location>
    <ligand>
        <name>ATP</name>
        <dbReference type="ChEBI" id="CHEBI:30616"/>
    </ligand>
</feature>
<feature type="site" description="Required for activity" evidence="1">
    <location>
        <position position="373"/>
    </location>
</feature>
<protein>
    <recommendedName>
        <fullName evidence="1">ATP synthase subunit alpha</fullName>
        <ecNumber evidence="1">7.1.2.2</ecNumber>
    </recommendedName>
    <alternativeName>
        <fullName evidence="1">ATP synthase F1 sector subunit alpha</fullName>
    </alternativeName>
    <alternativeName>
        <fullName evidence="1">F-ATPase subunit alpha</fullName>
    </alternativeName>
</protein>
<accession>B7NR36</accession>
<name>ATPA_ECO7I</name>
<gene>
    <name evidence="1" type="primary">atpA</name>
    <name type="ordered locus">ECIAI39_4338</name>
</gene>
<reference key="1">
    <citation type="journal article" date="2009" name="PLoS Genet.">
        <title>Organised genome dynamics in the Escherichia coli species results in highly diverse adaptive paths.</title>
        <authorList>
            <person name="Touchon M."/>
            <person name="Hoede C."/>
            <person name="Tenaillon O."/>
            <person name="Barbe V."/>
            <person name="Baeriswyl S."/>
            <person name="Bidet P."/>
            <person name="Bingen E."/>
            <person name="Bonacorsi S."/>
            <person name="Bouchier C."/>
            <person name="Bouvet O."/>
            <person name="Calteau A."/>
            <person name="Chiapello H."/>
            <person name="Clermont O."/>
            <person name="Cruveiller S."/>
            <person name="Danchin A."/>
            <person name="Diard M."/>
            <person name="Dossat C."/>
            <person name="Karoui M.E."/>
            <person name="Frapy E."/>
            <person name="Garry L."/>
            <person name="Ghigo J.M."/>
            <person name="Gilles A.M."/>
            <person name="Johnson J."/>
            <person name="Le Bouguenec C."/>
            <person name="Lescat M."/>
            <person name="Mangenot S."/>
            <person name="Martinez-Jehanne V."/>
            <person name="Matic I."/>
            <person name="Nassif X."/>
            <person name="Oztas S."/>
            <person name="Petit M.A."/>
            <person name="Pichon C."/>
            <person name="Rouy Z."/>
            <person name="Ruf C.S."/>
            <person name="Schneider D."/>
            <person name="Tourret J."/>
            <person name="Vacherie B."/>
            <person name="Vallenet D."/>
            <person name="Medigue C."/>
            <person name="Rocha E.P.C."/>
            <person name="Denamur E."/>
        </authorList>
    </citation>
    <scope>NUCLEOTIDE SEQUENCE [LARGE SCALE GENOMIC DNA]</scope>
    <source>
        <strain>IAI39 / ExPEC</strain>
    </source>
</reference>
<organism>
    <name type="scientific">Escherichia coli O7:K1 (strain IAI39 / ExPEC)</name>
    <dbReference type="NCBI Taxonomy" id="585057"/>
    <lineage>
        <taxon>Bacteria</taxon>
        <taxon>Pseudomonadati</taxon>
        <taxon>Pseudomonadota</taxon>
        <taxon>Gammaproteobacteria</taxon>
        <taxon>Enterobacterales</taxon>
        <taxon>Enterobacteriaceae</taxon>
        <taxon>Escherichia</taxon>
    </lineage>
</organism>
<keyword id="KW-0066">ATP synthesis</keyword>
<keyword id="KW-0067">ATP-binding</keyword>
<keyword id="KW-0997">Cell inner membrane</keyword>
<keyword id="KW-1003">Cell membrane</keyword>
<keyword id="KW-0139">CF(1)</keyword>
<keyword id="KW-0375">Hydrogen ion transport</keyword>
<keyword id="KW-0406">Ion transport</keyword>
<keyword id="KW-0472">Membrane</keyword>
<keyword id="KW-0547">Nucleotide-binding</keyword>
<keyword id="KW-1278">Translocase</keyword>
<keyword id="KW-0813">Transport</keyword>
<sequence length="513" mass="55222">MQLNSTEISELIKQRIAQFNVVSEAHNEGTIVSVSDGVIRIHGLADCMQGEMISLPGNRYAIALNLERDSVGAVVMGPYADLAEGMKVKCTGRILEVPVGRGLLGRVVNTLGAPIDGKGPLDHDGFSAVEAIAPGVIERQSVDQPVQTGYKAVDSMIPIGRGQRELIIGDRQTGKTALAIDAIINQRDSGIKCIYVAIGQKASTISNVVRKLEEHGALANTIVVVATASESAALQYLAPYAGCAMGEYFRDRGEDALIIYDDLSKQAVAYRQISLLLRRPPGREAFPGDVFYLHSRLLERAARVNAEYVEAFTKGEVKGKTGSLTALPIIETQAGDVSAFVPTNVISITDGQIFLETNLFNAGIRPAVNPGISVSRVGGAAQTKIMKKLSGGIRTALAQYRELAAFSQFASDLDDATRKQLDHGQKVTELLKQKQYAPMSVAQQSLVLFAAERGYLADVELSKIGSFEAALLAYVDRDHAPLMQEINQTGGYNDEIEGKLKGILDSFKATQSW</sequence>